<keyword id="KW-0028">Amino-acid biosynthesis</keyword>
<keyword id="KW-0963">Cytoplasm</keyword>
<keyword id="KW-0220">Diaminopimelate biosynthesis</keyword>
<keyword id="KW-0456">Lyase</keyword>
<keyword id="KW-0457">Lysine biosynthesis</keyword>
<keyword id="KW-1185">Reference proteome</keyword>
<keyword id="KW-0704">Schiff base</keyword>
<comment type="function">
    <text evidence="1">Catalyzes the condensation of (S)-aspartate-beta-semialdehyde [(S)-ASA] and pyruvate to 4-hydroxy-tetrahydrodipicolinate (HTPA).</text>
</comment>
<comment type="catalytic activity">
    <reaction evidence="1">
        <text>L-aspartate 4-semialdehyde + pyruvate = (2S,4S)-4-hydroxy-2,3,4,5-tetrahydrodipicolinate + H2O + H(+)</text>
        <dbReference type="Rhea" id="RHEA:34171"/>
        <dbReference type="ChEBI" id="CHEBI:15361"/>
        <dbReference type="ChEBI" id="CHEBI:15377"/>
        <dbReference type="ChEBI" id="CHEBI:15378"/>
        <dbReference type="ChEBI" id="CHEBI:67139"/>
        <dbReference type="ChEBI" id="CHEBI:537519"/>
        <dbReference type="EC" id="4.3.3.7"/>
    </reaction>
</comment>
<comment type="pathway">
    <text evidence="1">Amino-acid biosynthesis; L-lysine biosynthesis via DAP pathway; (S)-tetrahydrodipicolinate from L-aspartate: step 3/4.</text>
</comment>
<comment type="subunit">
    <text evidence="1">Homotetramer; dimer of dimers.</text>
</comment>
<comment type="subcellular location">
    <subcellularLocation>
        <location evidence="1">Cytoplasm</location>
    </subcellularLocation>
</comment>
<comment type="similarity">
    <text evidence="1">Belongs to the DapA family.</text>
</comment>
<comment type="caution">
    <text evidence="2">Was originally thought to be a dihydrodipicolinate synthase (DHDPS), catalyzing the condensation of (S)-aspartate-beta-semialdehyde [(S)-ASA] and pyruvate to dihydrodipicolinate (DHDP). However, it was shown in E.coli that the product of the enzymatic reaction is not dihydrodipicolinate but in fact (4S)-4-hydroxy-2,3,4,5-tetrahydro-(2S)-dipicolinic acid (HTPA), and that the consecutive dehydration reaction leading to DHDP is not spontaneous but catalyzed by DapB.</text>
</comment>
<name>DAPA_SYNC1</name>
<sequence>MFTGSMVAIITPFDREGRFDEETFRKLIDFQIENGTDVIVPCGTTGESATLDHAEHKKVIKTCIEQVNKRVPVLAGTGSNATSEAIELTRDAKKMGADGALLISPYYNKPSQEGVYRHFKAIADNVALPQVLYNVPGRTGMNMTAATTIRLASHPNVVGIKEASGDLTQASTIIAEAGDQINVISGDDFLTLPMMACGGKGVISVTANILPGEVKAMVTAVNENRYADAKKIHLNLLNLHQAMFIETNPVPVKVAAALMGLCGDHLRLPLVELLPENLASLKKVLSGYGLIQA</sequence>
<accession>Q3A1U7</accession>
<dbReference type="EC" id="4.3.3.7" evidence="1"/>
<dbReference type="EMBL" id="CP000142">
    <property type="protein sequence ID" value="ABA89660.1"/>
    <property type="molecule type" value="Genomic_DNA"/>
</dbReference>
<dbReference type="RefSeq" id="WP_011342186.1">
    <property type="nucleotide sequence ID" value="NC_007498.2"/>
</dbReference>
<dbReference type="SMR" id="Q3A1U7"/>
<dbReference type="STRING" id="338963.Pcar_2421"/>
<dbReference type="KEGG" id="pca:Pcar_2421"/>
<dbReference type="eggNOG" id="COG0329">
    <property type="taxonomic scope" value="Bacteria"/>
</dbReference>
<dbReference type="HOGENOM" id="CLU_049343_7_1_7"/>
<dbReference type="OrthoDB" id="9782828at2"/>
<dbReference type="UniPathway" id="UPA00034">
    <property type="reaction ID" value="UER00017"/>
</dbReference>
<dbReference type="Proteomes" id="UP000002534">
    <property type="component" value="Chromosome"/>
</dbReference>
<dbReference type="GO" id="GO:0005829">
    <property type="term" value="C:cytosol"/>
    <property type="evidence" value="ECO:0007669"/>
    <property type="project" value="TreeGrafter"/>
</dbReference>
<dbReference type="GO" id="GO:0008840">
    <property type="term" value="F:4-hydroxy-tetrahydrodipicolinate synthase activity"/>
    <property type="evidence" value="ECO:0007669"/>
    <property type="project" value="UniProtKB-UniRule"/>
</dbReference>
<dbReference type="GO" id="GO:0019877">
    <property type="term" value="P:diaminopimelate biosynthetic process"/>
    <property type="evidence" value="ECO:0007669"/>
    <property type="project" value="UniProtKB-UniRule"/>
</dbReference>
<dbReference type="GO" id="GO:0009089">
    <property type="term" value="P:lysine biosynthetic process via diaminopimelate"/>
    <property type="evidence" value="ECO:0007669"/>
    <property type="project" value="UniProtKB-UniRule"/>
</dbReference>
<dbReference type="CDD" id="cd00950">
    <property type="entry name" value="DHDPS"/>
    <property type="match status" value="1"/>
</dbReference>
<dbReference type="Gene3D" id="3.20.20.70">
    <property type="entry name" value="Aldolase class I"/>
    <property type="match status" value="1"/>
</dbReference>
<dbReference type="HAMAP" id="MF_00418">
    <property type="entry name" value="DapA"/>
    <property type="match status" value="1"/>
</dbReference>
<dbReference type="InterPro" id="IPR013785">
    <property type="entry name" value="Aldolase_TIM"/>
</dbReference>
<dbReference type="InterPro" id="IPR005263">
    <property type="entry name" value="DapA"/>
</dbReference>
<dbReference type="InterPro" id="IPR002220">
    <property type="entry name" value="DapA-like"/>
</dbReference>
<dbReference type="InterPro" id="IPR020625">
    <property type="entry name" value="Schiff_base-form_aldolases_AS"/>
</dbReference>
<dbReference type="NCBIfam" id="TIGR00674">
    <property type="entry name" value="dapA"/>
    <property type="match status" value="1"/>
</dbReference>
<dbReference type="PANTHER" id="PTHR12128:SF66">
    <property type="entry name" value="4-HYDROXY-2-OXOGLUTARATE ALDOLASE, MITOCHONDRIAL"/>
    <property type="match status" value="1"/>
</dbReference>
<dbReference type="PANTHER" id="PTHR12128">
    <property type="entry name" value="DIHYDRODIPICOLINATE SYNTHASE"/>
    <property type="match status" value="1"/>
</dbReference>
<dbReference type="Pfam" id="PF00701">
    <property type="entry name" value="DHDPS"/>
    <property type="match status" value="1"/>
</dbReference>
<dbReference type="PIRSF" id="PIRSF001365">
    <property type="entry name" value="DHDPS"/>
    <property type="match status" value="1"/>
</dbReference>
<dbReference type="PRINTS" id="PR00146">
    <property type="entry name" value="DHPICSNTHASE"/>
</dbReference>
<dbReference type="SMART" id="SM01130">
    <property type="entry name" value="DHDPS"/>
    <property type="match status" value="1"/>
</dbReference>
<dbReference type="SUPFAM" id="SSF51569">
    <property type="entry name" value="Aldolase"/>
    <property type="match status" value="1"/>
</dbReference>
<dbReference type="PROSITE" id="PS00666">
    <property type="entry name" value="DHDPS_2"/>
    <property type="match status" value="1"/>
</dbReference>
<gene>
    <name evidence="1" type="primary">dapA</name>
    <name type="ordered locus">Pcar_2421</name>
</gene>
<protein>
    <recommendedName>
        <fullName evidence="1">4-hydroxy-tetrahydrodipicolinate synthase</fullName>
        <shortName evidence="1">HTPA synthase</shortName>
        <ecNumber evidence="1">4.3.3.7</ecNumber>
    </recommendedName>
</protein>
<reference key="1">
    <citation type="submission" date="2005-10" db="EMBL/GenBank/DDBJ databases">
        <title>Complete sequence of Pelobacter carbinolicus DSM 2380.</title>
        <authorList>
            <person name="Copeland A."/>
            <person name="Lucas S."/>
            <person name="Lapidus A."/>
            <person name="Barry K."/>
            <person name="Detter J.C."/>
            <person name="Glavina T."/>
            <person name="Hammon N."/>
            <person name="Israni S."/>
            <person name="Pitluck S."/>
            <person name="Chertkov O."/>
            <person name="Schmutz J."/>
            <person name="Larimer F."/>
            <person name="Land M."/>
            <person name="Kyrpides N."/>
            <person name="Ivanova N."/>
            <person name="Richardson P."/>
        </authorList>
    </citation>
    <scope>NUCLEOTIDE SEQUENCE [LARGE SCALE GENOMIC DNA]</scope>
    <source>
        <strain>DSM 2380 / NBRC 103641 / GraBd1</strain>
    </source>
</reference>
<organism>
    <name type="scientific">Syntrophotalea carbinolica (strain DSM 2380 / NBRC 103641 / GraBd1)</name>
    <name type="common">Pelobacter carbinolicus</name>
    <dbReference type="NCBI Taxonomy" id="338963"/>
    <lineage>
        <taxon>Bacteria</taxon>
        <taxon>Pseudomonadati</taxon>
        <taxon>Thermodesulfobacteriota</taxon>
        <taxon>Desulfuromonadia</taxon>
        <taxon>Desulfuromonadales</taxon>
        <taxon>Syntrophotaleaceae</taxon>
        <taxon>Syntrophotalea</taxon>
    </lineage>
</organism>
<evidence type="ECO:0000255" key="1">
    <source>
        <dbReference type="HAMAP-Rule" id="MF_00418"/>
    </source>
</evidence>
<evidence type="ECO:0000305" key="2"/>
<feature type="chain" id="PRO_1000050236" description="4-hydroxy-tetrahydrodipicolinate synthase">
    <location>
        <begin position="1"/>
        <end position="293"/>
    </location>
</feature>
<feature type="active site" description="Proton donor/acceptor" evidence="1">
    <location>
        <position position="133"/>
    </location>
</feature>
<feature type="active site" description="Schiff-base intermediate with substrate" evidence="1">
    <location>
        <position position="161"/>
    </location>
</feature>
<feature type="binding site" evidence="1">
    <location>
        <position position="45"/>
    </location>
    <ligand>
        <name>pyruvate</name>
        <dbReference type="ChEBI" id="CHEBI:15361"/>
    </ligand>
</feature>
<feature type="binding site" evidence="1">
    <location>
        <position position="203"/>
    </location>
    <ligand>
        <name>pyruvate</name>
        <dbReference type="ChEBI" id="CHEBI:15361"/>
    </ligand>
</feature>
<feature type="site" description="Part of a proton relay during catalysis" evidence="1">
    <location>
        <position position="44"/>
    </location>
</feature>
<feature type="site" description="Part of a proton relay during catalysis" evidence="1">
    <location>
        <position position="107"/>
    </location>
</feature>
<proteinExistence type="inferred from homology"/>